<name>EFTU_AQUPY</name>
<proteinExistence type="inferred from homology"/>
<organism>
    <name type="scientific">Aquifex pyrophilus</name>
    <dbReference type="NCBI Taxonomy" id="2714"/>
    <lineage>
        <taxon>Bacteria</taxon>
        <taxon>Pseudomonadati</taxon>
        <taxon>Aquificota</taxon>
        <taxon>Aquificia</taxon>
        <taxon>Aquificales</taxon>
        <taxon>Aquificaceae</taxon>
        <taxon>Aquifex</taxon>
    </lineage>
</organism>
<keyword id="KW-0963">Cytoplasm</keyword>
<keyword id="KW-0251">Elongation factor</keyword>
<keyword id="KW-0342">GTP-binding</keyword>
<keyword id="KW-0378">Hydrolase</keyword>
<keyword id="KW-0460">Magnesium</keyword>
<keyword id="KW-0479">Metal-binding</keyword>
<keyword id="KW-0547">Nucleotide-binding</keyword>
<keyword id="KW-0648">Protein biosynthesis</keyword>
<comment type="function">
    <text evidence="2">GTP hydrolase that promotes the GTP-dependent binding of aminoacyl-tRNA to the A-site of ribosomes during protein biosynthesis.</text>
</comment>
<comment type="catalytic activity">
    <reaction evidence="2">
        <text>GTP + H2O = GDP + phosphate + H(+)</text>
        <dbReference type="Rhea" id="RHEA:19669"/>
        <dbReference type="ChEBI" id="CHEBI:15377"/>
        <dbReference type="ChEBI" id="CHEBI:15378"/>
        <dbReference type="ChEBI" id="CHEBI:37565"/>
        <dbReference type="ChEBI" id="CHEBI:43474"/>
        <dbReference type="ChEBI" id="CHEBI:58189"/>
        <dbReference type="EC" id="3.6.5.3"/>
    </reaction>
    <physiologicalReaction direction="left-to-right" evidence="2">
        <dbReference type="Rhea" id="RHEA:19670"/>
    </physiologicalReaction>
</comment>
<comment type="subunit">
    <text evidence="2">Monomer.</text>
</comment>
<comment type="subcellular location">
    <subcellularLocation>
        <location evidence="2">Cytoplasm</location>
    </subcellularLocation>
</comment>
<comment type="similarity">
    <text evidence="2">Belongs to the TRAFAC class translation factor GTPase superfamily. Classic translation factor GTPase family. EF-Tu/EF-1A subfamily.</text>
</comment>
<protein>
    <recommendedName>
        <fullName evidence="2">Elongation factor Tu</fullName>
        <shortName evidence="2">EF-Tu</shortName>
        <ecNumber evidence="2">3.6.5.3</ecNumber>
    </recommendedName>
</protein>
<accession>O50293</accession>
<evidence type="ECO:0000250" key="1"/>
<evidence type="ECO:0000255" key="2">
    <source>
        <dbReference type="HAMAP-Rule" id="MF_00118"/>
    </source>
</evidence>
<reference key="1">
    <citation type="journal article" date="1998" name="Electrophoresis">
        <title>Bacterial phylogeny based on comparative sequence analysis.</title>
        <authorList>
            <person name="Ludwig W."/>
            <person name="Strunk O."/>
            <person name="Klugbauer S."/>
            <person name="Klugbauer N."/>
            <person name="Weizenegger M."/>
            <person name="Neumaier J."/>
            <person name="Bachleitner M."/>
            <person name="Schleifer K.H."/>
        </authorList>
    </citation>
    <scope>NUCLEOTIDE SEQUENCE [GENOMIC DNA]</scope>
    <source>
        <strain>DSM 6858 / JCM 9492 / Kol5A</strain>
    </source>
</reference>
<gene>
    <name evidence="2" type="primary">tuf</name>
</gene>
<dbReference type="EC" id="3.6.5.3" evidence="2"/>
<dbReference type="EMBL" id="Y15787">
    <property type="protein sequence ID" value="CAA75781.1"/>
    <property type="molecule type" value="Genomic_DNA"/>
</dbReference>
<dbReference type="SMR" id="O50293"/>
<dbReference type="GO" id="GO:0005829">
    <property type="term" value="C:cytosol"/>
    <property type="evidence" value="ECO:0007669"/>
    <property type="project" value="TreeGrafter"/>
</dbReference>
<dbReference type="GO" id="GO:0005525">
    <property type="term" value="F:GTP binding"/>
    <property type="evidence" value="ECO:0007669"/>
    <property type="project" value="UniProtKB-UniRule"/>
</dbReference>
<dbReference type="GO" id="GO:0003924">
    <property type="term" value="F:GTPase activity"/>
    <property type="evidence" value="ECO:0007669"/>
    <property type="project" value="InterPro"/>
</dbReference>
<dbReference type="GO" id="GO:0003746">
    <property type="term" value="F:translation elongation factor activity"/>
    <property type="evidence" value="ECO:0007669"/>
    <property type="project" value="UniProtKB-UniRule"/>
</dbReference>
<dbReference type="CDD" id="cd01884">
    <property type="entry name" value="EF_Tu"/>
    <property type="match status" value="1"/>
</dbReference>
<dbReference type="CDD" id="cd03697">
    <property type="entry name" value="EFTU_II"/>
    <property type="match status" value="1"/>
</dbReference>
<dbReference type="CDD" id="cd03707">
    <property type="entry name" value="EFTU_III"/>
    <property type="match status" value="1"/>
</dbReference>
<dbReference type="FunFam" id="2.40.30.10:FF:000001">
    <property type="entry name" value="Elongation factor Tu"/>
    <property type="match status" value="1"/>
</dbReference>
<dbReference type="FunFam" id="3.40.50.300:FF:000003">
    <property type="entry name" value="Elongation factor Tu"/>
    <property type="match status" value="1"/>
</dbReference>
<dbReference type="Gene3D" id="3.40.50.300">
    <property type="entry name" value="P-loop containing nucleotide triphosphate hydrolases"/>
    <property type="match status" value="1"/>
</dbReference>
<dbReference type="Gene3D" id="2.40.30.10">
    <property type="entry name" value="Translation factors"/>
    <property type="match status" value="2"/>
</dbReference>
<dbReference type="HAMAP" id="MF_00118_B">
    <property type="entry name" value="EF_Tu_B"/>
    <property type="match status" value="1"/>
</dbReference>
<dbReference type="InterPro" id="IPR041709">
    <property type="entry name" value="EF-Tu_GTP-bd"/>
</dbReference>
<dbReference type="InterPro" id="IPR050055">
    <property type="entry name" value="EF-Tu_GTPase"/>
</dbReference>
<dbReference type="InterPro" id="IPR004161">
    <property type="entry name" value="EFTu-like_2"/>
</dbReference>
<dbReference type="InterPro" id="IPR033720">
    <property type="entry name" value="EFTU_2"/>
</dbReference>
<dbReference type="InterPro" id="IPR031157">
    <property type="entry name" value="G_TR_CS"/>
</dbReference>
<dbReference type="InterPro" id="IPR027417">
    <property type="entry name" value="P-loop_NTPase"/>
</dbReference>
<dbReference type="InterPro" id="IPR005225">
    <property type="entry name" value="Small_GTP-bd"/>
</dbReference>
<dbReference type="InterPro" id="IPR000795">
    <property type="entry name" value="T_Tr_GTP-bd_dom"/>
</dbReference>
<dbReference type="InterPro" id="IPR009000">
    <property type="entry name" value="Transl_B-barrel_sf"/>
</dbReference>
<dbReference type="InterPro" id="IPR009001">
    <property type="entry name" value="Transl_elong_EF1A/Init_IF2_C"/>
</dbReference>
<dbReference type="InterPro" id="IPR004541">
    <property type="entry name" value="Transl_elong_EFTu/EF1A_bac/org"/>
</dbReference>
<dbReference type="InterPro" id="IPR004160">
    <property type="entry name" value="Transl_elong_EFTu/EF1A_C"/>
</dbReference>
<dbReference type="NCBIfam" id="TIGR00485">
    <property type="entry name" value="EF-Tu"/>
    <property type="match status" value="1"/>
</dbReference>
<dbReference type="NCBIfam" id="NF000766">
    <property type="entry name" value="PRK00049.1"/>
    <property type="match status" value="1"/>
</dbReference>
<dbReference type="NCBIfam" id="NF009372">
    <property type="entry name" value="PRK12735.1"/>
    <property type="match status" value="1"/>
</dbReference>
<dbReference type="NCBIfam" id="NF009373">
    <property type="entry name" value="PRK12736.1"/>
    <property type="match status" value="1"/>
</dbReference>
<dbReference type="NCBIfam" id="TIGR00231">
    <property type="entry name" value="small_GTP"/>
    <property type="match status" value="1"/>
</dbReference>
<dbReference type="PANTHER" id="PTHR43721:SF22">
    <property type="entry name" value="ELONGATION FACTOR TU, MITOCHONDRIAL"/>
    <property type="match status" value="1"/>
</dbReference>
<dbReference type="PANTHER" id="PTHR43721">
    <property type="entry name" value="ELONGATION FACTOR TU-RELATED"/>
    <property type="match status" value="1"/>
</dbReference>
<dbReference type="Pfam" id="PF00009">
    <property type="entry name" value="GTP_EFTU"/>
    <property type="match status" value="1"/>
</dbReference>
<dbReference type="Pfam" id="PF03144">
    <property type="entry name" value="GTP_EFTU_D2"/>
    <property type="match status" value="1"/>
</dbReference>
<dbReference type="Pfam" id="PF03143">
    <property type="entry name" value="GTP_EFTU_D3"/>
    <property type="match status" value="1"/>
</dbReference>
<dbReference type="PRINTS" id="PR00315">
    <property type="entry name" value="ELONGATNFCT"/>
</dbReference>
<dbReference type="SUPFAM" id="SSF50465">
    <property type="entry name" value="EF-Tu/eEF-1alpha/eIF2-gamma C-terminal domain"/>
    <property type="match status" value="1"/>
</dbReference>
<dbReference type="SUPFAM" id="SSF52540">
    <property type="entry name" value="P-loop containing nucleoside triphosphate hydrolases"/>
    <property type="match status" value="1"/>
</dbReference>
<dbReference type="SUPFAM" id="SSF50447">
    <property type="entry name" value="Translation proteins"/>
    <property type="match status" value="1"/>
</dbReference>
<dbReference type="PROSITE" id="PS00301">
    <property type="entry name" value="G_TR_1"/>
    <property type="match status" value="1"/>
</dbReference>
<dbReference type="PROSITE" id="PS51722">
    <property type="entry name" value="G_TR_2"/>
    <property type="match status" value="1"/>
</dbReference>
<sequence>MAKEKFERTKEHVNVGTIGHVDHGKSTLTSAITCVLAAGLVEGGKAKCFKYEEIDKAPEEKERGITINITHVEYETAKRHYAHVDCPGHADYIKNMITGAAQMDGAILVVSAADGPMPQTREHVLLARQVNVPYIVVFMNKCDMVDDEELLELVELEVRELLSKYEYPGDEVPVIRGSALGALQELEQNSPGKWVGSIKELLNAMDEYIPTPEREVDKPFLMPIEDVFSISGRGTVVTGRVERGVLRPGDEVEIVGLREEPLKTVATSIEMFRKVLDEALPGDNIGVLLRGVGKDDVERGQVLAQPGSVKAHRKFRAQVYVLSKEEGGRHTPFFVNYRPQFYFRTADVTGTVVKLPEGVEMVMPGDNVELEVELIAPVALEEGLRFAIREGGRTVGAGVVTKILD</sequence>
<feature type="chain" id="PRO_0000091285" description="Elongation factor Tu">
    <location>
        <begin position="1"/>
        <end position="405"/>
    </location>
</feature>
<feature type="domain" description="tr-type G">
    <location>
        <begin position="10"/>
        <end position="213"/>
    </location>
</feature>
<feature type="region of interest" description="G1" evidence="1">
    <location>
        <begin position="19"/>
        <end position="26"/>
    </location>
</feature>
<feature type="region of interest" description="G2" evidence="1">
    <location>
        <begin position="64"/>
        <end position="68"/>
    </location>
</feature>
<feature type="region of interest" description="G3" evidence="1">
    <location>
        <begin position="85"/>
        <end position="88"/>
    </location>
</feature>
<feature type="region of interest" description="G4" evidence="1">
    <location>
        <begin position="140"/>
        <end position="143"/>
    </location>
</feature>
<feature type="region of interest" description="G5" evidence="1">
    <location>
        <begin position="178"/>
        <end position="180"/>
    </location>
</feature>
<feature type="binding site" evidence="2">
    <location>
        <begin position="19"/>
        <end position="26"/>
    </location>
    <ligand>
        <name>GTP</name>
        <dbReference type="ChEBI" id="CHEBI:37565"/>
    </ligand>
</feature>
<feature type="binding site" evidence="2">
    <location>
        <position position="26"/>
    </location>
    <ligand>
        <name>Mg(2+)</name>
        <dbReference type="ChEBI" id="CHEBI:18420"/>
    </ligand>
</feature>
<feature type="binding site" evidence="2">
    <location>
        <begin position="85"/>
        <end position="89"/>
    </location>
    <ligand>
        <name>GTP</name>
        <dbReference type="ChEBI" id="CHEBI:37565"/>
    </ligand>
</feature>
<feature type="binding site" evidence="2">
    <location>
        <begin position="140"/>
        <end position="143"/>
    </location>
    <ligand>
        <name>GTP</name>
        <dbReference type="ChEBI" id="CHEBI:37565"/>
    </ligand>
</feature>